<proteinExistence type="inferred from homology"/>
<gene>
    <name evidence="1" type="primary">darP</name>
    <name type="ordered locus">ECDH10B_4429</name>
</gene>
<comment type="function">
    <text evidence="1">Member of a network of 50S ribosomal subunit biogenesis factors which assembles along the 30S-50S interface, preventing incorrect 23S rRNA structures from forming. Promotes peptidyl transferase center (PTC) maturation.</text>
</comment>
<comment type="subcellular location">
    <subcellularLocation>
        <location evidence="1">Cytoplasm</location>
    </subcellularLocation>
    <text evidence="1">Associates with late stage pre-50S ribosomal subunits.</text>
</comment>
<comment type="similarity">
    <text evidence="1">Belongs to the DarP family.</text>
</comment>
<organism>
    <name type="scientific">Escherichia coli (strain K12 / DH10B)</name>
    <dbReference type="NCBI Taxonomy" id="316385"/>
    <lineage>
        <taxon>Bacteria</taxon>
        <taxon>Pseudomonadati</taxon>
        <taxon>Pseudomonadota</taxon>
        <taxon>Gammaproteobacteria</taxon>
        <taxon>Enterobacterales</taxon>
        <taxon>Enterobacteriaceae</taxon>
        <taxon>Escherichia</taxon>
    </lineage>
</organism>
<feature type="chain" id="PRO_1000198378" description="Dual-action ribosomal maturation protein DarP">
    <location>
        <begin position="1"/>
        <end position="183"/>
    </location>
</feature>
<evidence type="ECO:0000255" key="1">
    <source>
        <dbReference type="HAMAP-Rule" id="MF_00765"/>
    </source>
</evidence>
<name>DARP_ECODH</name>
<protein>
    <recommendedName>
        <fullName evidence="1">Dual-action ribosomal maturation protein DarP</fullName>
    </recommendedName>
    <alternativeName>
        <fullName evidence="1">Large ribosomal subunit assembly factor DarP</fullName>
    </alternativeName>
</protein>
<accession>B1XEL6</accession>
<dbReference type="EMBL" id="CP000948">
    <property type="protein sequence ID" value="ACB05218.1"/>
    <property type="molecule type" value="Genomic_DNA"/>
</dbReference>
<dbReference type="SMR" id="B1XEL6"/>
<dbReference type="KEGG" id="ecd:ECDH10B_4429"/>
<dbReference type="HOGENOM" id="CLU_106757_2_0_6"/>
<dbReference type="GO" id="GO:0005829">
    <property type="term" value="C:cytosol"/>
    <property type="evidence" value="ECO:0007669"/>
    <property type="project" value="TreeGrafter"/>
</dbReference>
<dbReference type="GO" id="GO:0043022">
    <property type="term" value="F:ribosome binding"/>
    <property type="evidence" value="ECO:0007669"/>
    <property type="project" value="UniProtKB-UniRule"/>
</dbReference>
<dbReference type="GO" id="GO:0019843">
    <property type="term" value="F:rRNA binding"/>
    <property type="evidence" value="ECO:0007669"/>
    <property type="project" value="UniProtKB-UniRule"/>
</dbReference>
<dbReference type="GO" id="GO:1902626">
    <property type="term" value="P:assembly of large subunit precursor of preribosome"/>
    <property type="evidence" value="ECO:0007669"/>
    <property type="project" value="UniProtKB-UniRule"/>
</dbReference>
<dbReference type="CDD" id="cd16331">
    <property type="entry name" value="YjgA-like"/>
    <property type="match status" value="1"/>
</dbReference>
<dbReference type="FunFam" id="1.10.60.30:FF:000001">
    <property type="entry name" value="UPF0307 protein YjgA"/>
    <property type="match status" value="1"/>
</dbReference>
<dbReference type="FunFam" id="1.10.60.30:FF:000002">
    <property type="entry name" value="UPF0307 protein YjgA"/>
    <property type="match status" value="1"/>
</dbReference>
<dbReference type="Gene3D" id="1.10.60.30">
    <property type="entry name" value="PSPTO4464-like domains"/>
    <property type="match status" value="2"/>
</dbReference>
<dbReference type="HAMAP" id="MF_00765">
    <property type="entry name" value="DarP"/>
    <property type="match status" value="1"/>
</dbReference>
<dbReference type="InterPro" id="IPR006839">
    <property type="entry name" value="DarP"/>
</dbReference>
<dbReference type="InterPro" id="IPR023153">
    <property type="entry name" value="DarP_sf"/>
</dbReference>
<dbReference type="NCBIfam" id="NF003593">
    <property type="entry name" value="PRK05255.1-1"/>
    <property type="match status" value="1"/>
</dbReference>
<dbReference type="PANTHER" id="PTHR38101">
    <property type="entry name" value="UPF0307 PROTEIN YJGA"/>
    <property type="match status" value="1"/>
</dbReference>
<dbReference type="PANTHER" id="PTHR38101:SF1">
    <property type="entry name" value="UPF0307 PROTEIN YJGA"/>
    <property type="match status" value="1"/>
</dbReference>
<dbReference type="Pfam" id="PF04751">
    <property type="entry name" value="DarP"/>
    <property type="match status" value="1"/>
</dbReference>
<dbReference type="PIRSF" id="PIRSF016183">
    <property type="entry name" value="UCP016183"/>
    <property type="match status" value="1"/>
</dbReference>
<dbReference type="SUPFAM" id="SSF158710">
    <property type="entry name" value="PSPTO4464-like"/>
    <property type="match status" value="1"/>
</dbReference>
<keyword id="KW-0963">Cytoplasm</keyword>
<keyword id="KW-0690">Ribosome biogenesis</keyword>
<keyword id="KW-0694">RNA-binding</keyword>
<keyword id="KW-0699">rRNA-binding</keyword>
<sequence length="183" mass="21359">MTKQPEDWLDDVPGDDIEDEDDEIIWVSKSEIKRDAEELKRLGAEIVDLGKNALDKIPLDADLRAAIELAQRIKMEGRRRQLQLIGKMLRQRDVEPIRQALDKLKNRHNQQVVLFHKLENLRDRLIDQGDDAIAEVLNLWPDADRQQLRTLIRNAKKEKEGNKPPKSARQIFQYLRELAENEG</sequence>
<reference key="1">
    <citation type="journal article" date="2008" name="J. Bacteriol.">
        <title>The complete genome sequence of Escherichia coli DH10B: insights into the biology of a laboratory workhorse.</title>
        <authorList>
            <person name="Durfee T."/>
            <person name="Nelson R."/>
            <person name="Baldwin S."/>
            <person name="Plunkett G. III"/>
            <person name="Burland V."/>
            <person name="Mau B."/>
            <person name="Petrosino J.F."/>
            <person name="Qin X."/>
            <person name="Muzny D.M."/>
            <person name="Ayele M."/>
            <person name="Gibbs R.A."/>
            <person name="Csorgo B."/>
            <person name="Posfai G."/>
            <person name="Weinstock G.M."/>
            <person name="Blattner F.R."/>
        </authorList>
    </citation>
    <scope>NUCLEOTIDE SEQUENCE [LARGE SCALE GENOMIC DNA]</scope>
    <source>
        <strain>K12 / DH10B</strain>
    </source>
</reference>